<gene>
    <name evidence="7" type="primary">ambra1b</name>
</gene>
<name>AMR1B_DANRE</name>
<accession>X1WHY6</accession>
<accession>I3IRN1</accession>
<proteinExistence type="evidence at transcript level"/>
<feature type="chain" id="PRO_0000453464" description="Activating molecule in BECN1-regulated autophagy protein 1B">
    <location>
        <begin position="1"/>
        <end position="1360"/>
    </location>
</feature>
<feature type="repeat" description="WD 1" evidence="3">
    <location>
        <begin position="50"/>
        <end position="89"/>
    </location>
</feature>
<feature type="repeat" description="WD 2" evidence="3">
    <location>
        <begin position="92"/>
        <end position="132"/>
    </location>
</feature>
<feature type="repeat" description="WD 3" evidence="3">
    <location>
        <begin position="134"/>
        <end position="174"/>
    </location>
</feature>
<feature type="region of interest" description="Disordered" evidence="4">
    <location>
        <begin position="249"/>
        <end position="277"/>
    </location>
</feature>
<feature type="region of interest" description="Disordered" evidence="4">
    <location>
        <begin position="315"/>
        <end position="364"/>
    </location>
</feature>
<feature type="region of interest" description="Disordered" evidence="4">
    <location>
        <begin position="412"/>
        <end position="490"/>
    </location>
</feature>
<feature type="region of interest" description="Disordered" evidence="4">
    <location>
        <begin position="514"/>
        <end position="573"/>
    </location>
</feature>
<feature type="region of interest" description="Disordered" evidence="4">
    <location>
        <begin position="587"/>
        <end position="616"/>
    </location>
</feature>
<feature type="region of interest" description="Disordered" evidence="4">
    <location>
        <begin position="664"/>
        <end position="688"/>
    </location>
</feature>
<feature type="region of interest" description="Disordered" evidence="4">
    <location>
        <begin position="754"/>
        <end position="796"/>
    </location>
</feature>
<feature type="region of interest" description="Disordered" evidence="4">
    <location>
        <begin position="1120"/>
        <end position="1142"/>
    </location>
</feature>
<feature type="region of interest" description="Disordered" evidence="4">
    <location>
        <begin position="1241"/>
        <end position="1360"/>
    </location>
</feature>
<feature type="short sequence motif" description="TQT motif 1" evidence="2">
    <location>
        <begin position="1109"/>
        <end position="1111"/>
    </location>
</feature>
<feature type="short sequence motif" description="TQT motif 2" evidence="2">
    <location>
        <begin position="1121"/>
        <end position="1123"/>
    </location>
</feature>
<feature type="compositionally biased region" description="Polar residues" evidence="4">
    <location>
        <begin position="249"/>
        <end position="258"/>
    </location>
</feature>
<feature type="compositionally biased region" description="Low complexity" evidence="4">
    <location>
        <begin position="319"/>
        <end position="333"/>
    </location>
</feature>
<feature type="compositionally biased region" description="Polar residues" evidence="4">
    <location>
        <begin position="350"/>
        <end position="361"/>
    </location>
</feature>
<feature type="compositionally biased region" description="Low complexity" evidence="4">
    <location>
        <begin position="428"/>
        <end position="437"/>
    </location>
</feature>
<feature type="compositionally biased region" description="Polar residues" evidence="4">
    <location>
        <begin position="443"/>
        <end position="454"/>
    </location>
</feature>
<feature type="compositionally biased region" description="Polar residues" evidence="4">
    <location>
        <begin position="473"/>
        <end position="490"/>
    </location>
</feature>
<feature type="compositionally biased region" description="Low complexity" evidence="4">
    <location>
        <begin position="590"/>
        <end position="607"/>
    </location>
</feature>
<feature type="compositionally biased region" description="Polar residues" evidence="4">
    <location>
        <begin position="754"/>
        <end position="768"/>
    </location>
</feature>
<feature type="compositionally biased region" description="Acidic residues" evidence="4">
    <location>
        <begin position="775"/>
        <end position="784"/>
    </location>
</feature>
<feature type="compositionally biased region" description="Polar residues" evidence="4">
    <location>
        <begin position="1129"/>
        <end position="1142"/>
    </location>
</feature>
<feature type="compositionally biased region" description="Polar residues" evidence="4">
    <location>
        <begin position="1241"/>
        <end position="1252"/>
    </location>
</feature>
<feature type="compositionally biased region" description="Low complexity" evidence="4">
    <location>
        <begin position="1278"/>
        <end position="1288"/>
    </location>
</feature>
<feature type="compositionally biased region" description="Basic and acidic residues" evidence="4">
    <location>
        <begin position="1311"/>
        <end position="1321"/>
    </location>
</feature>
<feature type="compositionally biased region" description="Low complexity" evidence="4">
    <location>
        <begin position="1329"/>
        <end position="1347"/>
    </location>
</feature>
<feature type="compositionally biased region" description="Basic and acidic residues" evidence="4">
    <location>
        <begin position="1348"/>
        <end position="1360"/>
    </location>
</feature>
<feature type="sequence conflict" description="In Ref. 1; CCA61107." evidence="8" ref="1">
    <original>P</original>
    <variation>T</variation>
    <location>
        <position position="326"/>
    </location>
</feature>
<feature type="sequence conflict" description="In Ref. 1; CCA61107." evidence="8" ref="1">
    <original>T</original>
    <variation>N</variation>
    <location>
        <position position="536"/>
    </location>
</feature>
<feature type="sequence conflict" description="In Ref. 1; CCA61107." evidence="8" ref="1">
    <original>T</original>
    <variation>S</variation>
    <location>
        <position position="618"/>
    </location>
</feature>
<feature type="sequence conflict" description="In Ref. 1; CCA61107." evidence="8" ref="1">
    <original>M</original>
    <variation>T</variation>
    <location>
        <position position="1257"/>
    </location>
</feature>
<feature type="sequence conflict" description="In Ref. 1; CCA61107." evidence="8" ref="1">
    <original>L</original>
    <variation>F</variation>
    <location>
        <position position="1289"/>
    </location>
</feature>
<feature type="sequence conflict" description="In Ref. 1; CCA61107." evidence="8" ref="1">
    <original>R</original>
    <variation>H</variation>
    <location>
        <position position="1321"/>
    </location>
</feature>
<organism>
    <name type="scientific">Danio rerio</name>
    <name type="common">Zebrafish</name>
    <name type="synonym">Brachydanio rerio</name>
    <dbReference type="NCBI Taxonomy" id="7955"/>
    <lineage>
        <taxon>Eukaryota</taxon>
        <taxon>Metazoa</taxon>
        <taxon>Chordata</taxon>
        <taxon>Craniata</taxon>
        <taxon>Vertebrata</taxon>
        <taxon>Euteleostomi</taxon>
        <taxon>Actinopterygii</taxon>
        <taxon>Neopterygii</taxon>
        <taxon>Teleostei</taxon>
        <taxon>Ostariophysi</taxon>
        <taxon>Cypriniformes</taxon>
        <taxon>Danionidae</taxon>
        <taxon>Danioninae</taxon>
        <taxon>Danio</taxon>
    </lineage>
</organism>
<protein>
    <recommendedName>
        <fullName evidence="7">Activating molecule in BECN1-regulated autophagy protein 1B</fullName>
    </recommendedName>
</protein>
<reference key="1">
    <citation type="journal article" date="2013" name="Autophagy">
        <title>Ambra1 knockdown in zebrafish leads to incomplete development due to severe defects in organogenesis.</title>
        <authorList>
            <person name="Benato F."/>
            <person name="Skobo T."/>
            <person name="Gioacchini G."/>
            <person name="Moro I."/>
            <person name="Ciccosanti F."/>
            <person name="Piacentini M."/>
            <person name="Fimia G.M."/>
            <person name="Carnevali O."/>
            <person name="Dalla Valle L."/>
        </authorList>
    </citation>
    <scope>NUCLEOTIDE SEQUENCE [MRNA]</scope>
    <scope>FUNCTION</scope>
    <scope>DEVELOPMENTAL STAGE</scope>
    <scope>DISRUPTION PHENOTYPE</scope>
    <source>
        <tissue evidence="9">Embryo</tissue>
    </source>
</reference>
<reference key="2">
    <citation type="journal article" date="2013" name="Nature">
        <title>The zebrafish reference genome sequence and its relationship to the human genome.</title>
        <authorList>
            <person name="Howe K."/>
            <person name="Clark M.D."/>
            <person name="Torroja C.F."/>
            <person name="Torrance J."/>
            <person name="Berthelot C."/>
            <person name="Muffato M."/>
            <person name="Collins J.E."/>
            <person name="Humphray S."/>
            <person name="McLaren K."/>
            <person name="Matthews L."/>
            <person name="McLaren S."/>
            <person name="Sealy I."/>
            <person name="Caccamo M."/>
            <person name="Churcher C."/>
            <person name="Scott C."/>
            <person name="Barrett J.C."/>
            <person name="Koch R."/>
            <person name="Rauch G.J."/>
            <person name="White S."/>
            <person name="Chow W."/>
            <person name="Kilian B."/>
            <person name="Quintais L.T."/>
            <person name="Guerra-Assuncao J.A."/>
            <person name="Zhou Y."/>
            <person name="Gu Y."/>
            <person name="Yen J."/>
            <person name="Vogel J.H."/>
            <person name="Eyre T."/>
            <person name="Redmond S."/>
            <person name="Banerjee R."/>
            <person name="Chi J."/>
            <person name="Fu B."/>
            <person name="Langley E."/>
            <person name="Maguire S.F."/>
            <person name="Laird G.K."/>
            <person name="Lloyd D."/>
            <person name="Kenyon E."/>
            <person name="Donaldson S."/>
            <person name="Sehra H."/>
            <person name="Almeida-King J."/>
            <person name="Loveland J."/>
            <person name="Trevanion S."/>
            <person name="Jones M."/>
            <person name="Quail M."/>
            <person name="Willey D."/>
            <person name="Hunt A."/>
            <person name="Burton J."/>
            <person name="Sims S."/>
            <person name="McLay K."/>
            <person name="Plumb B."/>
            <person name="Davis J."/>
            <person name="Clee C."/>
            <person name="Oliver K."/>
            <person name="Clark R."/>
            <person name="Riddle C."/>
            <person name="Elliot D."/>
            <person name="Threadgold G."/>
            <person name="Harden G."/>
            <person name="Ware D."/>
            <person name="Begum S."/>
            <person name="Mortimore B."/>
            <person name="Kerry G."/>
            <person name="Heath P."/>
            <person name="Phillimore B."/>
            <person name="Tracey A."/>
            <person name="Corby N."/>
            <person name="Dunn M."/>
            <person name="Johnson C."/>
            <person name="Wood J."/>
            <person name="Clark S."/>
            <person name="Pelan S."/>
            <person name="Griffiths G."/>
            <person name="Smith M."/>
            <person name="Glithero R."/>
            <person name="Howden P."/>
            <person name="Barker N."/>
            <person name="Lloyd C."/>
            <person name="Stevens C."/>
            <person name="Harley J."/>
            <person name="Holt K."/>
            <person name="Panagiotidis G."/>
            <person name="Lovell J."/>
            <person name="Beasley H."/>
            <person name="Henderson C."/>
            <person name="Gordon D."/>
            <person name="Auger K."/>
            <person name="Wright D."/>
            <person name="Collins J."/>
            <person name="Raisen C."/>
            <person name="Dyer L."/>
            <person name="Leung K."/>
            <person name="Robertson L."/>
            <person name="Ambridge K."/>
            <person name="Leongamornlert D."/>
            <person name="McGuire S."/>
            <person name="Gilderthorp R."/>
            <person name="Griffiths C."/>
            <person name="Manthravadi D."/>
            <person name="Nichol S."/>
            <person name="Barker G."/>
            <person name="Whitehead S."/>
            <person name="Kay M."/>
            <person name="Brown J."/>
            <person name="Murnane C."/>
            <person name="Gray E."/>
            <person name="Humphries M."/>
            <person name="Sycamore N."/>
            <person name="Barker D."/>
            <person name="Saunders D."/>
            <person name="Wallis J."/>
            <person name="Babbage A."/>
            <person name="Hammond S."/>
            <person name="Mashreghi-Mohammadi M."/>
            <person name="Barr L."/>
            <person name="Martin S."/>
            <person name="Wray P."/>
            <person name="Ellington A."/>
            <person name="Matthews N."/>
            <person name="Ellwood M."/>
            <person name="Woodmansey R."/>
            <person name="Clark G."/>
            <person name="Cooper J."/>
            <person name="Tromans A."/>
            <person name="Grafham D."/>
            <person name="Skuce C."/>
            <person name="Pandian R."/>
            <person name="Andrews R."/>
            <person name="Harrison E."/>
            <person name="Kimberley A."/>
            <person name="Garnett J."/>
            <person name="Fosker N."/>
            <person name="Hall R."/>
            <person name="Garner P."/>
            <person name="Kelly D."/>
            <person name="Bird C."/>
            <person name="Palmer S."/>
            <person name="Gehring I."/>
            <person name="Berger A."/>
            <person name="Dooley C.M."/>
            <person name="Ersan-Urun Z."/>
            <person name="Eser C."/>
            <person name="Geiger H."/>
            <person name="Geisler M."/>
            <person name="Karotki L."/>
            <person name="Kirn A."/>
            <person name="Konantz J."/>
            <person name="Konantz M."/>
            <person name="Oberlander M."/>
            <person name="Rudolph-Geiger S."/>
            <person name="Teucke M."/>
            <person name="Lanz C."/>
            <person name="Raddatz G."/>
            <person name="Osoegawa K."/>
            <person name="Zhu B."/>
            <person name="Rapp A."/>
            <person name="Widaa S."/>
            <person name="Langford C."/>
            <person name="Yang F."/>
            <person name="Schuster S.C."/>
            <person name="Carter N.P."/>
            <person name="Harrow J."/>
            <person name="Ning Z."/>
            <person name="Herrero J."/>
            <person name="Searle S.M."/>
            <person name="Enright A."/>
            <person name="Geisler R."/>
            <person name="Plasterk R.H."/>
            <person name="Lee C."/>
            <person name="Westerfield M."/>
            <person name="de Jong P.J."/>
            <person name="Zon L.I."/>
            <person name="Postlethwait J.H."/>
            <person name="Nusslein-Volhard C."/>
            <person name="Hubbard T.J."/>
            <person name="Roest Crollius H."/>
            <person name="Rogers J."/>
            <person name="Stemple D.L."/>
        </authorList>
    </citation>
    <scope>NUCLEOTIDE SEQUENCE [LARGE SCALE GENOMIC DNA]</scope>
    <source>
        <strain>Tuebingen</strain>
    </source>
</reference>
<reference key="3">
    <citation type="journal article" date="2014" name="PLoS ONE">
        <title>Zebrafish ambra1a and ambra1b knockdown impairs skeletal muscle development.</title>
        <authorList>
            <person name="Skobo T."/>
            <person name="Benato F."/>
            <person name="Grumati P."/>
            <person name="Meneghetti G."/>
            <person name="Cianfanelli V."/>
            <person name="Castagnaro S."/>
            <person name="Chrisam M."/>
            <person name="Di Bartolomeo S."/>
            <person name="Bonaldo P."/>
            <person name="Cecconi F."/>
            <person name="Dalla Valle L."/>
        </authorList>
    </citation>
    <scope>FUNCTION</scope>
    <scope>DISRUPTION PHENOTYPE</scope>
</reference>
<comment type="function">
    <text evidence="1 2 5 6">Substrate-recognition component of a DCX (DDB1-CUL4-X-box) E3 ubiquitin-protein ligase complex involved in cell cycle control and autophagy (PubMed:23348054). The DCX(AMBRA1) complex specifically mediates the polyubiquitination of target proteins (By similarity). Acts as an upstream master regulator of the transition from G1 to S cell phase: ambra1b specifically recognizes and binds phosphorylated cyclin-D (ccnd1, ccnd2 and ccnd3), leading to cyclin-D ubiquitination by the DCX(AMBRA1) complex and subsequent degradation (By similarity). Acts as a regulator of Cul5-RING (CRL5) E3 ubiquitin-protein ligase complexes by mediating ubiquitination and degradation of Elongin-C (eloc) component of CRL5 complexes (By similarity). Acts as a key regulator of autophagy by modulating the BECN1-PIK3C3 complex: controls protein turnover during neuronal development, and regulates normal cell survival and proliferation (By similarity). In normal conditions, ambra1b is tethered to the cytoskeleton via interaction with dyneins light chains (By similarity). Upon autophagy induction, ambra1b is released from the cytoskeletal docking site to induce autophagosome nucleation by mediating ubiquitination of proteins involved in autophagy (By similarity). Also acts as an activator of mitophagy (By similarity). Required for skeletal muscle development (PubMed:24922546).</text>
</comment>
<comment type="pathway">
    <text evidence="2">Protein modification; protein ubiquitination.</text>
</comment>
<comment type="subunit">
    <text evidence="2">Component of the DCX(AMBRA1) E3 ubiquitin ligase complex.</text>
</comment>
<comment type="subcellular location">
    <subcellularLocation>
        <location evidence="2">Endoplasmic reticulum</location>
    </subcellularLocation>
    <subcellularLocation>
        <location evidence="2">Cytoplasm</location>
        <location evidence="2">Cytoskeleton</location>
    </subcellularLocation>
    <subcellularLocation>
        <location evidence="1">Cytoplasmic vesicle</location>
        <location evidence="1">Autophagosome</location>
    </subcellularLocation>
    <subcellularLocation>
        <location evidence="2">Mitochondrion</location>
    </subcellularLocation>
    <subcellularLocation>
        <location evidence="1">Cytoplasm</location>
        <location evidence="1">Cytosol</location>
    </subcellularLocation>
    <subcellularLocation>
        <location evidence="2">Nucleus</location>
    </subcellularLocation>
    <subcellularLocation>
        <location evidence="1">Cell junction</location>
        <location evidence="1">Focal adhesion</location>
    </subcellularLocation>
    <text evidence="2">Localizes to the cytoskeleton in absence of autophagy induction. Upon autophagy induction, ambra1a relocalizes to the endoplasmic reticulum to enable autophagosome nucleation. Partially localizes at mitochondria in normal conditions.</text>
</comment>
<comment type="developmental stage">
    <text evidence="5">Expressed both maternally and zygotically. Present as maternal transcripts in the eggs and display a gradual decline until 8 hours post-fertilization (hpf), being replaced by zygotic mRNAs from 12 hpf onwards (PubMed:23348054). After 24 hpf, the transcripts are mainly localized in the brain and otic vesicles (PubMed:23348054).</text>
</comment>
<comment type="disruption phenotype">
    <text evidence="5 6">Morpholino knockdown of ambra1a and ambra1b results in reduced autophagy and increased apoptosis during embryogenesis (PubMed:23348054). Morpholino knockdown of ambra1a and ambra1b results in impaired locomotion, caused by abnormal myogenesis (PubMed:24922546).</text>
</comment>
<comment type="similarity">
    <text evidence="8">Belongs to the WD repeat AMBRA1 family.</text>
</comment>
<evidence type="ECO:0000250" key="1">
    <source>
        <dbReference type="UniProtKB" id="A2AH22"/>
    </source>
</evidence>
<evidence type="ECO:0000250" key="2">
    <source>
        <dbReference type="UniProtKB" id="Q9C0C7"/>
    </source>
</evidence>
<evidence type="ECO:0000255" key="3"/>
<evidence type="ECO:0000256" key="4">
    <source>
        <dbReference type="SAM" id="MobiDB-lite"/>
    </source>
</evidence>
<evidence type="ECO:0000269" key="5">
    <source>
    </source>
</evidence>
<evidence type="ECO:0000269" key="6">
    <source>
    </source>
</evidence>
<evidence type="ECO:0000303" key="7">
    <source>
    </source>
</evidence>
<evidence type="ECO:0000305" key="8"/>
<evidence type="ECO:0000312" key="9">
    <source>
        <dbReference type="EMBL" id="CCA61107.2"/>
    </source>
</evidence>
<sequence length="1360" mass="148984">MAVQNRNSVLILSGRERGARMLGSQRLLQQLVEDRTRWMKWQSQKVELPDNPRSTFLLAFSPDRNLVASTHVNHNIYITDVKTGKCLHSLVGHRRTPWCVTFHPTIPGLVASGCLDGEVRIWDLHGGSESWFTESNVAIASLAFHPTAQLLLIATNNELHFWDWSRPEPFAVVKTASETERVRLVRFDPLGHNLLTAIVNPSNQQNEDDSEVPMDSMEMALFRQRSLLRSPPVRRTPILHNFLHILSSRSSGAQANDQSRPAPEPREPPSIPRFQYPVRTEPADRPALQGCTQHLGLGCLCSRCAASRNLFTQNPTGLQPSDSTQPQTQSGPSAFSPAPSQTRTSDRPSAFSSVFSGTAGNSAHRGLLPLRTIDPLGSQVPSHLEAPGRLPGADWSGSLLSTGHEHGLGAIGVETSSGRGVVPPPRTSSSSMDLLSLRRFPDGSSSSPIYTSATEGRGLVLPGTEPNRGRPNDGTSSGHHPFYDNTQRNNPASIRNVLQCNLSRYFMEYERMQELERPGGSREVAGGPGPMQELLTSSMDAERPGPSHNGSSHTGNGGAVATPSQNHPNRCRSCHNLLTFNHDTQRWERSGQTSSSSSSQEGPSWPLSVPPFEDPGQTARVEAQAPEMRPMELGEASSGLQGQQPMGLVYNQETGQWESVYRQPTVSASSEAAEDALNPEVPVDNPDEDSLRRRLLESSLFPFSRYDMSSSRDHPIYPDPARLSPAAYYAQRMIQYLSRRESIRQRSLQNRLRTLSNSQADSQSNNPSSVPPEASDGDYEDIEEPGDRTRHRMPRNARMSAPSLGRFVPRRFLLPEYLPYAGLFHERGQSGLATHSSINRVLAGASIGDGQSAVASNIANTTYRLQWWDFTKFDLPEISNATVNVLVPHCKIYNDASCDISADGQLLAVFIPSSQRGFADEGILAVYSLAPHNLGEMLYTKRFGPNAISVSLSPMGCYVMVGLASRRILLHPTTDHMVAQVFRLQQPHGGETSIRMMFNVVYPMAPDQRRHVSINSARWLPEPGMGLAYGTNKGDLVICRPVDFRSDGDNPSDLNADSLFTINSSSRTRGVERPGTSRSGWRFDRDMGLMNAIGLQPRQAAPSVTSQGTQTPVVRLQNAETQTERELPSASTFQNTHTTSRHTVQTASTSTERHTHPEMTHTLVQASVSEGSLNRTNLPATYHVESAAEPGTGEDALSRIRRLMAEGGMTAVVQRERSTTMASMGGFGNNIVVSHRIHRGSQTSVRTAQGGNPTPEMPAGLGVSTLFHTEPLVDSLEAPGPSGSSGAPLPTPFTNRSEFAGVSPMVESDLFGDRQPDDVQRRPSRGGLNMSNHSNNNNNDHSNSYSESRSRDYPDDLYGR</sequence>
<dbReference type="EMBL" id="FR846230">
    <property type="protein sequence ID" value="CCA61107.2"/>
    <property type="molecule type" value="mRNA"/>
</dbReference>
<dbReference type="EMBL" id="CU181898">
    <property type="status" value="NOT_ANNOTATED_CDS"/>
    <property type="molecule type" value="Genomic_DNA"/>
</dbReference>
<dbReference type="RefSeq" id="NP_001289149.1">
    <property type="nucleotide sequence ID" value="NM_001302220.1"/>
</dbReference>
<dbReference type="SMR" id="X1WHY6"/>
<dbReference type="FunCoup" id="X1WHY6">
    <property type="interactions" value="2495"/>
</dbReference>
<dbReference type="STRING" id="7955.ENSDARP00000129851"/>
<dbReference type="PaxDb" id="7955-ENSDARP00000129851"/>
<dbReference type="Ensembl" id="ENSDART00000156761">
    <property type="protein sequence ID" value="ENSDARP00000129851"/>
    <property type="gene ID" value="ENSDARG00000039878"/>
</dbReference>
<dbReference type="GeneID" id="559106"/>
<dbReference type="KEGG" id="dre:559106"/>
<dbReference type="AGR" id="ZFIN:ZDB-GENE-050208-235"/>
<dbReference type="CTD" id="559106"/>
<dbReference type="ZFIN" id="ZDB-GENE-050208-235">
    <property type="gene designation" value="ambra1b"/>
</dbReference>
<dbReference type="eggNOG" id="KOG0266">
    <property type="taxonomic scope" value="Eukaryota"/>
</dbReference>
<dbReference type="InParanoid" id="X1WHY6"/>
<dbReference type="OMA" id="TTECCQH"/>
<dbReference type="OrthoDB" id="6363363at2759"/>
<dbReference type="PhylomeDB" id="X1WHY6"/>
<dbReference type="Reactome" id="R-DRE-1632852">
    <property type="pathway name" value="Macroautophagy"/>
</dbReference>
<dbReference type="UniPathway" id="UPA00143"/>
<dbReference type="PRO" id="PR:X1WHY6"/>
<dbReference type="Proteomes" id="UP000000437">
    <property type="component" value="Chromosome 25"/>
</dbReference>
<dbReference type="Bgee" id="ENSDARG00000039878">
    <property type="expression patterns" value="Expressed in mature ovarian follicle and 25 other cell types or tissues"/>
</dbReference>
<dbReference type="ExpressionAtlas" id="X1WHY6">
    <property type="expression patterns" value="baseline"/>
</dbReference>
<dbReference type="GO" id="GO:0005776">
    <property type="term" value="C:autophagosome"/>
    <property type="evidence" value="ECO:0007669"/>
    <property type="project" value="UniProtKB-SubCell"/>
</dbReference>
<dbReference type="GO" id="GO:0080008">
    <property type="term" value="C:Cul4-RING E3 ubiquitin ligase complex"/>
    <property type="evidence" value="ECO:0000250"/>
    <property type="project" value="UniProtKB"/>
</dbReference>
<dbReference type="GO" id="GO:0031410">
    <property type="term" value="C:cytoplasmic vesicle"/>
    <property type="evidence" value="ECO:0007669"/>
    <property type="project" value="UniProtKB-KW"/>
</dbReference>
<dbReference type="GO" id="GO:0005856">
    <property type="term" value="C:cytoskeleton"/>
    <property type="evidence" value="ECO:0007669"/>
    <property type="project" value="UniProtKB-SubCell"/>
</dbReference>
<dbReference type="GO" id="GO:0005829">
    <property type="term" value="C:cytosol"/>
    <property type="evidence" value="ECO:0007669"/>
    <property type="project" value="UniProtKB-SubCell"/>
</dbReference>
<dbReference type="GO" id="GO:0005783">
    <property type="term" value="C:endoplasmic reticulum"/>
    <property type="evidence" value="ECO:0007669"/>
    <property type="project" value="UniProtKB-SubCell"/>
</dbReference>
<dbReference type="GO" id="GO:0005925">
    <property type="term" value="C:focal adhesion"/>
    <property type="evidence" value="ECO:0007669"/>
    <property type="project" value="UniProtKB-SubCell"/>
</dbReference>
<dbReference type="GO" id="GO:0043231">
    <property type="term" value="C:intracellular membrane-bounded organelle"/>
    <property type="evidence" value="ECO:0000318"/>
    <property type="project" value="GO_Central"/>
</dbReference>
<dbReference type="GO" id="GO:0005739">
    <property type="term" value="C:mitochondrion"/>
    <property type="evidence" value="ECO:0007669"/>
    <property type="project" value="UniProtKB-SubCell"/>
</dbReference>
<dbReference type="GO" id="GO:0005634">
    <property type="term" value="C:nucleus"/>
    <property type="evidence" value="ECO:0000250"/>
    <property type="project" value="UniProtKB"/>
</dbReference>
<dbReference type="GO" id="GO:0072542">
    <property type="term" value="F:protein phosphatase activator activity"/>
    <property type="evidence" value="ECO:0000250"/>
    <property type="project" value="UniProtKB"/>
</dbReference>
<dbReference type="GO" id="GO:1990756">
    <property type="term" value="F:ubiquitin-like ligase-substrate adaptor activity"/>
    <property type="evidence" value="ECO:0000250"/>
    <property type="project" value="UniProtKB"/>
</dbReference>
<dbReference type="GO" id="GO:0000045">
    <property type="term" value="P:autophagosome assembly"/>
    <property type="evidence" value="ECO:0000250"/>
    <property type="project" value="UniProtKB"/>
</dbReference>
<dbReference type="GO" id="GO:0043009">
    <property type="term" value="P:chordate embryonic development"/>
    <property type="evidence" value="ECO:0000315"/>
    <property type="project" value="ZFIN"/>
</dbReference>
<dbReference type="GO" id="GO:0007281">
    <property type="term" value="P:germ cell development"/>
    <property type="evidence" value="ECO:0000315"/>
    <property type="project" value="ZFIN"/>
</dbReference>
<dbReference type="GO" id="GO:0008406">
    <property type="term" value="P:gonad development"/>
    <property type="evidence" value="ECO:0000315"/>
    <property type="project" value="ZFIN"/>
</dbReference>
<dbReference type="GO" id="GO:0007626">
    <property type="term" value="P:locomotory behavior"/>
    <property type="evidence" value="ECO:0000315"/>
    <property type="project" value="ZFIN"/>
</dbReference>
<dbReference type="GO" id="GO:0000423">
    <property type="term" value="P:mitophagy"/>
    <property type="evidence" value="ECO:0000318"/>
    <property type="project" value="GO_Central"/>
</dbReference>
<dbReference type="GO" id="GO:1904544">
    <property type="term" value="P:positive regulation of free ubiquitin chain polymerization"/>
    <property type="evidence" value="ECO:0000250"/>
    <property type="project" value="UniProtKB"/>
</dbReference>
<dbReference type="GO" id="GO:1901526">
    <property type="term" value="P:positive regulation of mitophagy"/>
    <property type="evidence" value="ECO:0000250"/>
    <property type="project" value="UniProtKB"/>
</dbReference>
<dbReference type="GO" id="GO:0045591">
    <property type="term" value="P:positive regulation of regulatory T cell differentiation"/>
    <property type="evidence" value="ECO:0000250"/>
    <property type="project" value="UniProtKB"/>
</dbReference>
<dbReference type="GO" id="GO:0000209">
    <property type="term" value="P:protein polyubiquitination"/>
    <property type="evidence" value="ECO:0000250"/>
    <property type="project" value="UniProtKB"/>
</dbReference>
<dbReference type="GO" id="GO:2000045">
    <property type="term" value="P:regulation of G1/S transition of mitotic cell cycle"/>
    <property type="evidence" value="ECO:0000250"/>
    <property type="project" value="UniProtKB"/>
</dbReference>
<dbReference type="GO" id="GO:0048741">
    <property type="term" value="P:skeletal muscle fiber development"/>
    <property type="evidence" value="ECO:0000315"/>
    <property type="project" value="ZFIN"/>
</dbReference>
<dbReference type="FunFam" id="2.130.10.10:FF:000361">
    <property type="entry name" value="Activating molecule in beclin-1-regulated autophagy"/>
    <property type="match status" value="1"/>
</dbReference>
<dbReference type="Gene3D" id="2.130.10.10">
    <property type="entry name" value="YVTN repeat-like/Quinoprotein amine dehydrogenase"/>
    <property type="match status" value="1"/>
</dbReference>
<dbReference type="InterPro" id="IPR052596">
    <property type="entry name" value="AMBRA1_autophagy"/>
</dbReference>
<dbReference type="InterPro" id="IPR015943">
    <property type="entry name" value="WD40/YVTN_repeat-like_dom_sf"/>
</dbReference>
<dbReference type="InterPro" id="IPR019775">
    <property type="entry name" value="WD40_repeat_CS"/>
</dbReference>
<dbReference type="InterPro" id="IPR036322">
    <property type="entry name" value="WD40_repeat_dom_sf"/>
</dbReference>
<dbReference type="InterPro" id="IPR001680">
    <property type="entry name" value="WD40_rpt"/>
</dbReference>
<dbReference type="PANTHER" id="PTHR22874">
    <property type="entry name" value="ACTIVATING MOLECULE IN BECN1-REGULATED AUTOPHAGY PROTEIN 1"/>
    <property type="match status" value="1"/>
</dbReference>
<dbReference type="PANTHER" id="PTHR22874:SF1">
    <property type="entry name" value="ACTIVATING MOLECULE IN BECN1-REGULATED AUTOPHAGY PROTEIN 1"/>
    <property type="match status" value="1"/>
</dbReference>
<dbReference type="Pfam" id="PF00400">
    <property type="entry name" value="WD40"/>
    <property type="match status" value="1"/>
</dbReference>
<dbReference type="SMART" id="SM00320">
    <property type="entry name" value="WD40"/>
    <property type="match status" value="3"/>
</dbReference>
<dbReference type="SUPFAM" id="SSF50978">
    <property type="entry name" value="WD40 repeat-like"/>
    <property type="match status" value="1"/>
</dbReference>
<dbReference type="PROSITE" id="PS00678">
    <property type="entry name" value="WD_REPEATS_1"/>
    <property type="match status" value="1"/>
</dbReference>
<dbReference type="PROSITE" id="PS50082">
    <property type="entry name" value="WD_REPEATS_2"/>
    <property type="match status" value="1"/>
</dbReference>
<dbReference type="PROSITE" id="PS50294">
    <property type="entry name" value="WD_REPEATS_REGION"/>
    <property type="match status" value="1"/>
</dbReference>
<keyword id="KW-0072">Autophagy</keyword>
<keyword id="KW-0131">Cell cycle</keyword>
<keyword id="KW-0965">Cell junction</keyword>
<keyword id="KW-0963">Cytoplasm</keyword>
<keyword id="KW-0968">Cytoplasmic vesicle</keyword>
<keyword id="KW-0206">Cytoskeleton</keyword>
<keyword id="KW-0256">Endoplasmic reticulum</keyword>
<keyword id="KW-0496">Mitochondrion</keyword>
<keyword id="KW-0539">Nucleus</keyword>
<keyword id="KW-1185">Reference proteome</keyword>
<keyword id="KW-0677">Repeat</keyword>
<keyword id="KW-0833">Ubl conjugation pathway</keyword>
<keyword id="KW-0853">WD repeat</keyword>